<evidence type="ECO:0000255" key="1">
    <source>
        <dbReference type="HAMAP-Rule" id="MF_03015"/>
    </source>
</evidence>
<evidence type="ECO:0000256" key="2">
    <source>
        <dbReference type="SAM" id="MobiDB-lite"/>
    </source>
</evidence>
<evidence type="ECO:0000305" key="3"/>
<sequence>MASKQPAILNPTPEDISLLLAAQTHIGTKNCEKAMLPYVHKRRADGIHLINIGKTWEKLVFAARVLAAVENPADICVISSRTYGHRAVHKFAANTGATAIAGRFTPGSFTNYITRSFKEPRVIVVTDPRVDHQAIRESAYVNIPVIALCDTDAPLRHVDIAIPGNNKGRHSIGLLWWLLCREFLRLRGIVPRTPNGWNVMVDMFFYRDPEEIEREQAEAALAKQAAAANAMQESTIEQVDFAIEGAGAGGVNPSVAANLPAGGEQVDWSADAAQDWAADTGAAPAASSWD</sequence>
<keyword id="KW-0963">Cytoplasm</keyword>
<keyword id="KW-1185">Reference proteome</keyword>
<keyword id="KW-0687">Ribonucleoprotein</keyword>
<keyword id="KW-0689">Ribosomal protein</keyword>
<comment type="function">
    <text evidence="1">Required for the assembly and/or stability of the 40S ribosomal subunit. Required for the processing of the 20S rRNA-precursor to mature 18S rRNA in a late step of the maturation of 40S ribosomal subunits.</text>
</comment>
<comment type="subunit">
    <text evidence="1">Component of the small ribosomal subunit. Mature ribosomes consist of a small (40S) and a large (60S) subunit. The 40S subunit contains about 33 different proteins and 1 molecule of RNA (18S). The 60S subunit contains about 49 different proteins and 3 molecules of RNA (25S, 5.8S and 5S). Interacts with RPS21.</text>
</comment>
<comment type="subcellular location">
    <subcellularLocation>
        <location evidence="1">Cytoplasm</location>
    </subcellularLocation>
</comment>
<comment type="similarity">
    <text evidence="1">Belongs to the universal ribosomal protein uS2 family.</text>
</comment>
<gene>
    <name evidence="1" type="primary">RPS0</name>
    <name type="ORF">MGL_1553</name>
</gene>
<protein>
    <recommendedName>
        <fullName evidence="1">Small ribosomal subunit protein uS2</fullName>
    </recommendedName>
    <alternativeName>
        <fullName evidence="3">40S ribosomal protein S0</fullName>
    </alternativeName>
</protein>
<organism>
    <name type="scientific">Malassezia globosa (strain ATCC MYA-4612 / CBS 7966)</name>
    <name type="common">Dandruff-associated fungus</name>
    <dbReference type="NCBI Taxonomy" id="425265"/>
    <lineage>
        <taxon>Eukaryota</taxon>
        <taxon>Fungi</taxon>
        <taxon>Dikarya</taxon>
        <taxon>Basidiomycota</taxon>
        <taxon>Ustilaginomycotina</taxon>
        <taxon>Malasseziomycetes</taxon>
        <taxon>Malasseziales</taxon>
        <taxon>Malasseziaceae</taxon>
        <taxon>Malassezia</taxon>
    </lineage>
</organism>
<dbReference type="EMBL" id="AAYY01000004">
    <property type="protein sequence ID" value="EDP44156.1"/>
    <property type="molecule type" value="Genomic_DNA"/>
</dbReference>
<dbReference type="RefSeq" id="XP_001731370.1">
    <property type="nucleotide sequence ID" value="XM_001731318.1"/>
</dbReference>
<dbReference type="SMR" id="A8PXY6"/>
<dbReference type="FunCoup" id="A8PXY6">
    <property type="interactions" value="311"/>
</dbReference>
<dbReference type="STRING" id="425265.A8PXY6"/>
<dbReference type="GeneID" id="5855677"/>
<dbReference type="KEGG" id="mgl:MGL_1553"/>
<dbReference type="VEuPathDB" id="FungiDB:MGL_1553"/>
<dbReference type="InParanoid" id="A8PXY6"/>
<dbReference type="OMA" id="QCHLGAK"/>
<dbReference type="OrthoDB" id="414863at2759"/>
<dbReference type="Proteomes" id="UP000008837">
    <property type="component" value="Unassembled WGS sequence"/>
</dbReference>
<dbReference type="GO" id="GO:0022627">
    <property type="term" value="C:cytosolic small ribosomal subunit"/>
    <property type="evidence" value="ECO:0007669"/>
    <property type="project" value="UniProtKB-UniRule"/>
</dbReference>
<dbReference type="GO" id="GO:0003735">
    <property type="term" value="F:structural constituent of ribosome"/>
    <property type="evidence" value="ECO:0007669"/>
    <property type="project" value="UniProtKB-UniRule"/>
</dbReference>
<dbReference type="GO" id="GO:0000028">
    <property type="term" value="P:ribosomal small subunit assembly"/>
    <property type="evidence" value="ECO:0007669"/>
    <property type="project" value="UniProtKB-UniRule"/>
</dbReference>
<dbReference type="GO" id="GO:0006412">
    <property type="term" value="P:translation"/>
    <property type="evidence" value="ECO:0007669"/>
    <property type="project" value="UniProtKB-UniRule"/>
</dbReference>
<dbReference type="CDD" id="cd01425">
    <property type="entry name" value="RPS2"/>
    <property type="match status" value="1"/>
</dbReference>
<dbReference type="FunFam" id="3.40.50.10490:FF:000017">
    <property type="entry name" value="40S ribosomal protein SA"/>
    <property type="match status" value="1"/>
</dbReference>
<dbReference type="Gene3D" id="3.40.50.10490">
    <property type="entry name" value="Glucose-6-phosphate isomerase like protein, domain 1"/>
    <property type="match status" value="1"/>
</dbReference>
<dbReference type="HAMAP" id="MF_03015">
    <property type="entry name" value="Ribosomal_S2_euk"/>
    <property type="match status" value="1"/>
</dbReference>
<dbReference type="InterPro" id="IPR001865">
    <property type="entry name" value="Ribosomal_uS2"/>
</dbReference>
<dbReference type="InterPro" id="IPR032281">
    <property type="entry name" value="Ribosomal_uS2_C"/>
</dbReference>
<dbReference type="InterPro" id="IPR018130">
    <property type="entry name" value="Ribosomal_uS2_CS"/>
</dbReference>
<dbReference type="InterPro" id="IPR027498">
    <property type="entry name" value="Ribosomal_uS2_euk"/>
</dbReference>
<dbReference type="InterPro" id="IPR005707">
    <property type="entry name" value="Ribosomal_uS2_euk/arc"/>
</dbReference>
<dbReference type="InterPro" id="IPR023591">
    <property type="entry name" value="Ribosomal_uS2_flav_dom_sf"/>
</dbReference>
<dbReference type="NCBIfam" id="TIGR01012">
    <property type="entry name" value="uS2_euk_arch"/>
    <property type="match status" value="1"/>
</dbReference>
<dbReference type="PANTHER" id="PTHR11489">
    <property type="entry name" value="40S RIBOSOMAL PROTEIN SA"/>
    <property type="match status" value="1"/>
</dbReference>
<dbReference type="Pfam" id="PF16122">
    <property type="entry name" value="40S_SA_C"/>
    <property type="match status" value="1"/>
</dbReference>
<dbReference type="Pfam" id="PF00318">
    <property type="entry name" value="Ribosomal_S2"/>
    <property type="match status" value="2"/>
</dbReference>
<dbReference type="PRINTS" id="PR00395">
    <property type="entry name" value="RIBOSOMALS2"/>
</dbReference>
<dbReference type="SUPFAM" id="SSF52313">
    <property type="entry name" value="Ribosomal protein S2"/>
    <property type="match status" value="1"/>
</dbReference>
<dbReference type="PROSITE" id="PS00962">
    <property type="entry name" value="RIBOSOMAL_S2_1"/>
    <property type="match status" value="1"/>
</dbReference>
<dbReference type="PROSITE" id="PS00963">
    <property type="entry name" value="RIBOSOMAL_S2_2"/>
    <property type="match status" value="1"/>
</dbReference>
<proteinExistence type="inferred from homology"/>
<name>RSSA_MALGO</name>
<feature type="chain" id="PRO_0000371638" description="Small ribosomal subunit protein uS2">
    <location>
        <begin position="1"/>
        <end position="290"/>
    </location>
</feature>
<feature type="region of interest" description="Disordered" evidence="2">
    <location>
        <begin position="268"/>
        <end position="290"/>
    </location>
</feature>
<reference key="1">
    <citation type="journal article" date="2007" name="Proc. Natl. Acad. Sci. U.S.A.">
        <title>Dandruff-associated Malassezia genomes reveal convergent and divergent virulence traits shared with plant and human fungal pathogens.</title>
        <authorList>
            <person name="Xu J."/>
            <person name="Saunders C.W."/>
            <person name="Hu P."/>
            <person name="Grant R.A."/>
            <person name="Boekhout T."/>
            <person name="Kuramae E.E."/>
            <person name="Kronstad J.W."/>
            <person name="DeAngelis Y.M."/>
            <person name="Reeder N.L."/>
            <person name="Johnstone K.R."/>
            <person name="Leland M."/>
            <person name="Fieno A.M."/>
            <person name="Begley W.M."/>
            <person name="Sun Y."/>
            <person name="Lacey M.P."/>
            <person name="Chaudhary T."/>
            <person name="Keough T."/>
            <person name="Chu L."/>
            <person name="Sears R."/>
            <person name="Yuan B."/>
            <person name="Dawson T.L. Jr."/>
        </authorList>
    </citation>
    <scope>NUCLEOTIDE SEQUENCE [LARGE SCALE GENOMIC DNA]</scope>
    <source>
        <strain>ATCC MYA-4612 / CBS 7966</strain>
    </source>
</reference>
<accession>A8PXY6</accession>